<accession>Q70XY5</accession>
<keyword id="KW-0150">Chloroplast</keyword>
<keyword id="KW-0934">Plastid</keyword>
<keyword id="KW-1185">Reference proteome</keyword>
<keyword id="KW-0687">Ribonucleoprotein</keyword>
<keyword id="KW-0689">Ribosomal protein</keyword>
<proteinExistence type="inferred from homology"/>
<evidence type="ECO:0000255" key="1">
    <source>
        <dbReference type="HAMAP-Rule" id="MF_00294"/>
    </source>
</evidence>
<evidence type="ECO:0000305" key="2"/>
<organism>
    <name type="scientific">Amborella trichopoda</name>
    <dbReference type="NCBI Taxonomy" id="13333"/>
    <lineage>
        <taxon>Eukaryota</taxon>
        <taxon>Viridiplantae</taxon>
        <taxon>Streptophyta</taxon>
        <taxon>Embryophyta</taxon>
        <taxon>Tracheophyta</taxon>
        <taxon>Spermatophyta</taxon>
        <taxon>Magnoliopsida</taxon>
        <taxon>Amborellales</taxon>
        <taxon>Amborellaceae</taxon>
        <taxon>Amborella</taxon>
    </lineage>
</organism>
<gene>
    <name evidence="1" type="primary">rpl33</name>
</gene>
<name>RK33_AMBTC</name>
<sequence>MAKGKDARVRVILECTSCTRNGANAKKESPGISRYITEKNRHNTPSRLELKKFCPYCSKHMIHAEIKK</sequence>
<comment type="subcellular location">
    <subcellularLocation>
        <location>Plastid</location>
        <location>Chloroplast</location>
    </subcellularLocation>
</comment>
<comment type="similarity">
    <text evidence="1">Belongs to the bacterial ribosomal protein bL33 family.</text>
</comment>
<feature type="chain" id="PRO_0000170273" description="Large ribosomal subunit protein bL33c">
    <location>
        <begin position="1"/>
        <end position="68"/>
    </location>
</feature>
<dbReference type="EMBL" id="AJ506156">
    <property type="protein sequence ID" value="CAD45127.1"/>
    <property type="molecule type" value="Genomic_DNA"/>
</dbReference>
<dbReference type="RefSeq" id="NP_904120.1">
    <property type="nucleotide sequence ID" value="NC_005086.1"/>
</dbReference>
<dbReference type="STRING" id="13333.Q70XY5"/>
<dbReference type="GeneID" id="2546590"/>
<dbReference type="KEGG" id="atr:2546590"/>
<dbReference type="OrthoDB" id="361870at2759"/>
<dbReference type="Proteomes" id="UP000017836">
    <property type="component" value="Chloroplast"/>
</dbReference>
<dbReference type="GO" id="GO:0009507">
    <property type="term" value="C:chloroplast"/>
    <property type="evidence" value="ECO:0007669"/>
    <property type="project" value="UniProtKB-SubCell"/>
</dbReference>
<dbReference type="GO" id="GO:1990904">
    <property type="term" value="C:ribonucleoprotein complex"/>
    <property type="evidence" value="ECO:0007669"/>
    <property type="project" value="UniProtKB-KW"/>
</dbReference>
<dbReference type="GO" id="GO:0005840">
    <property type="term" value="C:ribosome"/>
    <property type="evidence" value="ECO:0007669"/>
    <property type="project" value="UniProtKB-KW"/>
</dbReference>
<dbReference type="GO" id="GO:0003735">
    <property type="term" value="F:structural constituent of ribosome"/>
    <property type="evidence" value="ECO:0007669"/>
    <property type="project" value="InterPro"/>
</dbReference>
<dbReference type="GO" id="GO:0006412">
    <property type="term" value="P:translation"/>
    <property type="evidence" value="ECO:0007669"/>
    <property type="project" value="UniProtKB-UniRule"/>
</dbReference>
<dbReference type="Gene3D" id="2.20.28.120">
    <property type="entry name" value="Ribosomal protein L33"/>
    <property type="match status" value="1"/>
</dbReference>
<dbReference type="HAMAP" id="MF_00294">
    <property type="entry name" value="Ribosomal_bL33"/>
    <property type="match status" value="1"/>
</dbReference>
<dbReference type="InterPro" id="IPR001705">
    <property type="entry name" value="Ribosomal_bL33"/>
</dbReference>
<dbReference type="InterPro" id="IPR018264">
    <property type="entry name" value="Ribosomal_bL33_CS"/>
</dbReference>
<dbReference type="InterPro" id="IPR038584">
    <property type="entry name" value="Ribosomal_bL33_sf"/>
</dbReference>
<dbReference type="InterPro" id="IPR011332">
    <property type="entry name" value="Ribosomal_zn-bd"/>
</dbReference>
<dbReference type="NCBIfam" id="NF001764">
    <property type="entry name" value="PRK00504.1"/>
    <property type="match status" value="1"/>
</dbReference>
<dbReference type="NCBIfam" id="NF001860">
    <property type="entry name" value="PRK00595.1"/>
    <property type="match status" value="1"/>
</dbReference>
<dbReference type="NCBIfam" id="TIGR01023">
    <property type="entry name" value="rpmG_bact"/>
    <property type="match status" value="1"/>
</dbReference>
<dbReference type="PANTHER" id="PTHR43168">
    <property type="entry name" value="50S RIBOSOMAL PROTEIN L33, CHLOROPLASTIC"/>
    <property type="match status" value="1"/>
</dbReference>
<dbReference type="PANTHER" id="PTHR43168:SF2">
    <property type="entry name" value="LARGE RIBOSOMAL SUBUNIT PROTEIN BL33C"/>
    <property type="match status" value="1"/>
</dbReference>
<dbReference type="Pfam" id="PF00471">
    <property type="entry name" value="Ribosomal_L33"/>
    <property type="match status" value="1"/>
</dbReference>
<dbReference type="SUPFAM" id="SSF57829">
    <property type="entry name" value="Zn-binding ribosomal proteins"/>
    <property type="match status" value="1"/>
</dbReference>
<dbReference type="PROSITE" id="PS00582">
    <property type="entry name" value="RIBOSOMAL_L33"/>
    <property type="match status" value="1"/>
</dbReference>
<reference key="1">
    <citation type="journal article" date="2003" name="Mol. Biol. Evol.">
        <title>Analysis of the Amborella trichopoda chloroplast genome sequence suggests that Amborella is not a basal angiosperm.</title>
        <authorList>
            <person name="Goremykin V.V."/>
            <person name="Hirsch-Ernst K.I."/>
            <person name="Wolfl S."/>
            <person name="Hellwig F.H."/>
        </authorList>
    </citation>
    <scope>NUCLEOTIDE SEQUENCE [LARGE SCALE GENOMIC DNA]</scope>
</reference>
<geneLocation type="chloroplast"/>
<protein>
    <recommendedName>
        <fullName evidence="1">Large ribosomal subunit protein bL33c</fullName>
    </recommendedName>
    <alternativeName>
        <fullName evidence="2">50S ribosomal protein L33, chloroplastic</fullName>
    </alternativeName>
</protein>